<dbReference type="EC" id="2.7.8.29" evidence="5 6 7"/>
<dbReference type="EMBL" id="D10234">
    <property type="protein sequence ID" value="BAA01084.1"/>
    <property type="molecule type" value="mRNA"/>
</dbReference>
<dbReference type="EMBL" id="JH001582">
    <property type="protein sequence ID" value="EGW05677.1"/>
    <property type="status" value="ALT_SEQ"/>
    <property type="molecule type" value="Genomic_DNA"/>
</dbReference>
<dbReference type="RefSeq" id="XP_016835725.1">
    <property type="nucleotide sequence ID" value="XM_016980236.1"/>
</dbReference>
<dbReference type="SMR" id="Q00576"/>
<dbReference type="PaxDb" id="10029-XP_007620671.1"/>
<dbReference type="Ensembl" id="ENSCGRT00001021627.1">
    <property type="protein sequence ID" value="ENSCGRP00001017383.1"/>
    <property type="gene ID" value="ENSCGRG00001017439.1"/>
</dbReference>
<dbReference type="eggNOG" id="KOG2735">
    <property type="taxonomic scope" value="Eukaryota"/>
</dbReference>
<dbReference type="GeneTree" id="ENSGT00530000063576"/>
<dbReference type="InParanoid" id="G3I993"/>
<dbReference type="UniPathway" id="UPA00948"/>
<dbReference type="Proteomes" id="UP000001075">
    <property type="component" value="Unassembled WGS sequence"/>
</dbReference>
<dbReference type="Proteomes" id="UP000694386">
    <property type="component" value="Unplaced"/>
</dbReference>
<dbReference type="Proteomes" id="UP001108280">
    <property type="component" value="Unplaced"/>
</dbReference>
<dbReference type="GO" id="GO:0005789">
    <property type="term" value="C:endoplasmic reticulum membrane"/>
    <property type="evidence" value="ECO:0000250"/>
    <property type="project" value="UniProtKB"/>
</dbReference>
<dbReference type="GO" id="GO:0016020">
    <property type="term" value="C:membrane"/>
    <property type="evidence" value="ECO:0000250"/>
    <property type="project" value="UniProtKB"/>
</dbReference>
<dbReference type="GO" id="GO:0106258">
    <property type="term" value="F:L-serine-phosphatidylcholine phosphatidyltransferase activity"/>
    <property type="evidence" value="ECO:0000314"/>
    <property type="project" value="UniProtKB"/>
</dbReference>
<dbReference type="GO" id="GO:0106245">
    <property type="term" value="F:L-serine-phosphatidylethanolamine phosphatidyltransferase activity"/>
    <property type="evidence" value="ECO:0000314"/>
    <property type="project" value="UniProtKB"/>
</dbReference>
<dbReference type="GO" id="GO:0006659">
    <property type="term" value="P:phosphatidylserine biosynthetic process"/>
    <property type="evidence" value="ECO:0000315"/>
    <property type="project" value="UniProtKB"/>
</dbReference>
<dbReference type="InterPro" id="IPR004277">
    <property type="entry name" value="PSS"/>
</dbReference>
<dbReference type="PANTHER" id="PTHR15362">
    <property type="entry name" value="PHOSPHATIDYLINOSITOL SYNTHASE"/>
    <property type="match status" value="1"/>
</dbReference>
<dbReference type="PANTHER" id="PTHR15362:SF15">
    <property type="entry name" value="PHOSPHATIDYLSERINE SYNTHASE 1"/>
    <property type="match status" value="1"/>
</dbReference>
<dbReference type="Pfam" id="PF03034">
    <property type="entry name" value="PSS"/>
    <property type="match status" value="1"/>
</dbReference>
<protein>
    <recommendedName>
        <fullName>Phosphatidylserine synthase 1</fullName>
        <shortName>PSS-1</shortName>
        <shortName>PtdSer synthase 1</shortName>
        <ecNumber evidence="5 6 7">2.7.8.29</ecNumber>
    </recommendedName>
    <alternativeName>
        <fullName>Serine-exchange enzyme I</fullName>
    </alternativeName>
</protein>
<feature type="initiator methionine" description="Removed" evidence="1">
    <location>
        <position position="1"/>
    </location>
</feature>
<feature type="chain" id="PRO_0000056828" description="Phosphatidylserine synthase 1">
    <location>
        <begin position="2"/>
        <end position="471"/>
    </location>
</feature>
<feature type="topological domain" description="Cytoplasmic" evidence="3">
    <location>
        <begin position="2"/>
        <end position="35"/>
    </location>
</feature>
<feature type="transmembrane region" description="Helical" evidence="3">
    <location>
        <begin position="36"/>
        <end position="56"/>
    </location>
</feature>
<feature type="topological domain" description="Lumenal" evidence="3">
    <location>
        <begin position="57"/>
        <end position="72"/>
    </location>
</feature>
<feature type="transmembrane region" description="Helical" evidence="3">
    <location>
        <begin position="73"/>
        <end position="93"/>
    </location>
</feature>
<feature type="topological domain" description="Cytoplasmic" evidence="3">
    <location>
        <begin position="94"/>
        <end position="102"/>
    </location>
</feature>
<feature type="transmembrane region" description="Helical" evidence="3">
    <location>
        <begin position="103"/>
        <end position="123"/>
    </location>
</feature>
<feature type="topological domain" description="Lumenal" evidence="3">
    <location>
        <begin position="124"/>
        <end position="160"/>
    </location>
</feature>
<feature type="transmembrane region" description="Helical" evidence="3">
    <location>
        <begin position="161"/>
        <end position="181"/>
    </location>
</feature>
<feature type="topological domain" description="Cytoplasmic" evidence="3">
    <location>
        <begin position="182"/>
        <end position="186"/>
    </location>
</feature>
<feature type="transmembrane region" description="Helical" evidence="3">
    <location>
        <begin position="187"/>
        <end position="207"/>
    </location>
</feature>
<feature type="topological domain" description="Lumenal" evidence="3">
    <location>
        <begin position="208"/>
        <end position="216"/>
    </location>
</feature>
<feature type="transmembrane region" description="Helical" evidence="3">
    <location>
        <begin position="217"/>
        <end position="237"/>
    </location>
</feature>
<feature type="topological domain" description="Cytoplasmic" evidence="3">
    <location>
        <begin position="238"/>
        <end position="286"/>
    </location>
</feature>
<feature type="transmembrane region" description="Helical" evidence="3">
    <location>
        <begin position="287"/>
        <end position="307"/>
    </location>
</feature>
<feature type="topological domain" description="Lumenal" evidence="3">
    <location>
        <begin position="308"/>
        <end position="309"/>
    </location>
</feature>
<feature type="transmembrane region" description="Helical" evidence="3">
    <location>
        <begin position="310"/>
        <end position="330"/>
    </location>
</feature>
<feature type="topological domain" description="Cytoplasmic" evidence="3">
    <location>
        <begin position="331"/>
        <end position="355"/>
    </location>
</feature>
<feature type="transmembrane region" description="Helical" evidence="3">
    <location>
        <begin position="356"/>
        <end position="376"/>
    </location>
</feature>
<feature type="topological domain" description="Lumenal" evidence="3">
    <location>
        <begin position="377"/>
        <end position="380"/>
    </location>
</feature>
<feature type="transmembrane region" description="Helical" evidence="3">
    <location>
        <begin position="381"/>
        <end position="401"/>
    </location>
</feature>
<feature type="topological domain" description="Cytoplasmic" evidence="3">
    <location>
        <begin position="402"/>
        <end position="471"/>
    </location>
</feature>
<feature type="region of interest" description="Disordered" evidence="4">
    <location>
        <begin position="426"/>
        <end position="471"/>
    </location>
</feature>
<feature type="compositionally biased region" description="Basic residues" evidence="4">
    <location>
        <begin position="453"/>
        <end position="462"/>
    </location>
</feature>
<feature type="modified residue" description="N-acetylalanine" evidence="1">
    <location>
        <position position="2"/>
    </location>
</feature>
<feature type="modified residue" description="Phosphoserine" evidence="1">
    <location>
        <position position="417"/>
    </location>
</feature>
<feature type="modified residue" description="Phosphoserine" evidence="1">
    <location>
        <position position="440"/>
    </location>
</feature>
<feature type="modified residue" description="Phosphoserine" evidence="1">
    <location>
        <position position="452"/>
    </location>
</feature>
<feature type="mutagenesis site" description="Resistant to inhibition by exogenous phosphatidylserine." evidence="7">
    <original>R</original>
    <variation>K</variation>
    <location>
        <position position="95"/>
    </location>
</feature>
<evidence type="ECO:0000250" key="1">
    <source>
        <dbReference type="UniProtKB" id="P48651"/>
    </source>
</evidence>
<evidence type="ECO:0000250" key="2">
    <source>
        <dbReference type="UniProtKB" id="Q99LH2"/>
    </source>
</evidence>
<evidence type="ECO:0000255" key="3"/>
<evidence type="ECO:0000256" key="4">
    <source>
        <dbReference type="SAM" id="MobiDB-lite"/>
    </source>
</evidence>
<evidence type="ECO:0000269" key="5">
    <source>
    </source>
</evidence>
<evidence type="ECO:0000269" key="6">
    <source>
    </source>
</evidence>
<evidence type="ECO:0000269" key="7">
    <source>
    </source>
</evidence>
<evidence type="ECO:0000305" key="8"/>
<evidence type="ECO:0000305" key="9">
    <source>
    </source>
</evidence>
<comment type="function">
    <text evidence="5 6 7">Catalyzes a base-exchange reaction in which the polar head group of phosphatidylethanolamine (PE) or phosphatidylcholine (PC) is replaced by L-serine (PubMed:1748687, PubMed:3084470, PubMed:9539713). Catalyzes mainly the conversion of phosphatidylcholine (PubMed:1748687, PubMed:3084470, PubMed:9539713). Also converts, in vitro and to a lesser extent, phosphatidylethanolamine (PubMed:1748687, PubMed:3084470, PubMed:9539713).</text>
</comment>
<comment type="catalytic activity">
    <reaction evidence="5 6 7">
        <text>a 1,2-diacyl-sn-glycero-3-phosphoethanolamine + L-serine = a 1,2-diacyl-sn-glycero-3-phospho-L-serine + ethanolamine</text>
        <dbReference type="Rhea" id="RHEA:27606"/>
        <dbReference type="ChEBI" id="CHEBI:33384"/>
        <dbReference type="ChEBI" id="CHEBI:57262"/>
        <dbReference type="ChEBI" id="CHEBI:57603"/>
        <dbReference type="ChEBI" id="CHEBI:64612"/>
        <dbReference type="EC" id="2.7.8.29"/>
    </reaction>
    <physiologicalReaction direction="left-to-right" evidence="9">
        <dbReference type="Rhea" id="RHEA:27607"/>
    </physiologicalReaction>
</comment>
<comment type="catalytic activity">
    <reaction evidence="5 6 7">
        <text>a 1,2-diacyl-sn-glycero-3-phosphocholine + L-serine = a 1,2-diacyl-sn-glycero-3-phospho-L-serine + choline</text>
        <dbReference type="Rhea" id="RHEA:45088"/>
        <dbReference type="ChEBI" id="CHEBI:15354"/>
        <dbReference type="ChEBI" id="CHEBI:33384"/>
        <dbReference type="ChEBI" id="CHEBI:57262"/>
        <dbReference type="ChEBI" id="CHEBI:57643"/>
    </reaction>
    <physiologicalReaction direction="left-to-right" evidence="9">
        <dbReference type="Rhea" id="RHEA:45089"/>
    </physiologicalReaction>
</comment>
<comment type="activity regulation">
    <text evidence="7">Inhibited by exogenous phosphatidylserine.</text>
</comment>
<comment type="pathway">
    <text>Phospholipid metabolism; phosphatidylserine biosynthesis.</text>
</comment>
<comment type="subcellular location">
    <subcellularLocation>
        <location evidence="2">Endoplasmic reticulum membrane</location>
        <topology evidence="2">Multi-pass membrane protein</topology>
    </subcellularLocation>
    <text evidence="2">Highly enriched in the mitochondria-associated membrane (MAM).</text>
</comment>
<comment type="similarity">
    <text evidence="8">Belongs to the phosphatidyl serine synthase family.</text>
</comment>
<comment type="sequence caution" evidence="8">
    <conflict type="erroneous gene model prediction">
        <sequence resource="EMBL-CDS" id="EGW05677"/>
    </conflict>
</comment>
<gene>
    <name type="primary">PTDSS1</name>
    <name type="synonym">PSSA</name>
</gene>
<organism>
    <name type="scientific">Cricetulus griseus</name>
    <name type="common">Chinese hamster</name>
    <name type="synonym">Cricetulus barabensis griseus</name>
    <dbReference type="NCBI Taxonomy" id="10029"/>
    <lineage>
        <taxon>Eukaryota</taxon>
        <taxon>Metazoa</taxon>
        <taxon>Chordata</taxon>
        <taxon>Craniata</taxon>
        <taxon>Vertebrata</taxon>
        <taxon>Euteleostomi</taxon>
        <taxon>Mammalia</taxon>
        <taxon>Eutheria</taxon>
        <taxon>Euarchontoglires</taxon>
        <taxon>Glires</taxon>
        <taxon>Rodentia</taxon>
        <taxon>Myomorpha</taxon>
        <taxon>Muroidea</taxon>
        <taxon>Cricetidae</taxon>
        <taxon>Cricetinae</taxon>
        <taxon>Cricetulus</taxon>
    </lineage>
</organism>
<proteinExistence type="evidence at protein level"/>
<keyword id="KW-0007">Acetylation</keyword>
<keyword id="KW-0256">Endoplasmic reticulum</keyword>
<keyword id="KW-0444">Lipid biosynthesis</keyword>
<keyword id="KW-0443">Lipid metabolism</keyword>
<keyword id="KW-0472">Membrane</keyword>
<keyword id="KW-0594">Phospholipid biosynthesis</keyword>
<keyword id="KW-1208">Phospholipid metabolism</keyword>
<keyword id="KW-0597">Phosphoprotein</keyword>
<keyword id="KW-1185">Reference proteome</keyword>
<keyword id="KW-0808">Transferase</keyword>
<keyword id="KW-0812">Transmembrane</keyword>
<keyword id="KW-1133">Transmembrane helix</keyword>
<reference key="1">
    <citation type="journal article" date="1991" name="J. Biol. Chem.">
        <title>A Chinese hamster cDNA encoding a protein essential for phosphatidylserine synthase I activity.</title>
        <authorList>
            <person name="Kuge O."/>
            <person name="Nishijima M."/>
            <person name="Akamatsu Y."/>
        </authorList>
    </citation>
    <scope>NUCLEOTIDE SEQUENCE [MRNA]</scope>
    <scope>FUNCTION</scope>
    <scope>CATALYTIC ACTIVITY</scope>
    <source>
        <tissue>Ovary</tissue>
    </source>
</reference>
<reference key="2">
    <citation type="journal article" date="2011" name="Nat. Biotechnol.">
        <title>The genomic sequence of the Chinese hamster ovary (CHO)-K1 cell line.</title>
        <authorList>
            <person name="Xu X."/>
            <person name="Nagarajan H."/>
            <person name="Lewis N.E."/>
            <person name="Pan S."/>
            <person name="Cai Z."/>
            <person name="Liu X."/>
            <person name="Chen W."/>
            <person name="Xie M."/>
            <person name="Wang W."/>
            <person name="Hammond S."/>
            <person name="Andersen M.R."/>
            <person name="Neff N."/>
            <person name="Passarelli B."/>
            <person name="Koh W."/>
            <person name="Fan H.C."/>
            <person name="Wang J."/>
            <person name="Gui Y."/>
            <person name="Lee K.H."/>
            <person name="Betenbaugh M.J."/>
            <person name="Quake S.R."/>
            <person name="Famili I."/>
            <person name="Palsson B.O."/>
            <person name="Wang J."/>
        </authorList>
    </citation>
    <scope>NUCLEOTIDE SEQUENCE [LARGE SCALE GENOMIC DNA]</scope>
</reference>
<reference key="3">
    <citation type="journal article" date="1986" name="J. Biol. Chem.">
        <title>Phosphatidylserine biosynthesis in cultured Chinese hamster ovary cells. II. Isolation and characterization of phosphatidylserine auxotrophs.</title>
        <authorList>
            <person name="Kuge O."/>
            <person name="Nishijima M."/>
            <person name="Akamatsu Y."/>
        </authorList>
    </citation>
    <scope>FUNCTION</scope>
    <scope>CATALYTIC ACTIVITY</scope>
</reference>
<reference key="4">
    <citation type="journal article" date="1998" name="Proc. Natl. Acad. Sci. U.S.A.">
        <title>Control of phosphatidylserine biosynthesis through phosphatidylserine-mediated inhibition of phosphatidylserine synthase I in Chinese hamster ovary cells.</title>
        <authorList>
            <person name="Kuge O."/>
            <person name="Hasegawa K."/>
            <person name="Saito K."/>
            <person name="Nishijima M."/>
        </authorList>
    </citation>
    <scope>FUNCTION</scope>
    <scope>CATALYTIC ACTIVITY</scope>
    <scope>ACTIVITY REGULATION</scope>
    <scope>MUTAGENESIS OF ARG-95</scope>
</reference>
<sequence>MASCVGSRTLSKDDVNYRMHFRMINEQQVEDITIDFFYRPHTITLLSFTIVSLMYFAFTRDDSVPEDNIWRGILSVIFFFLIISVLAFPNGPFTRPHPALWRMVFGLSVLYFLFLVFLLFLNFEQVKSLMYWLDPNLRYATREADIMEYAVNCHVITWERIVSHFDIFAFGHFWGWAMKALLIRSYGLCWTISITWELTELFFMHLLPNFAECWWDQVILDILLCNGGGIWLGMVVCRFLEMRTYHWASFKDIHTTTGKIKRAVLQFTPASWTYVRWFDPKSSFQRVAGVYLFMIIWQLTELNTFFLKHIFVFQASHPLSWCRILFIGCITAPTVRQYYAYLTDTQCKRVGTQCWVFGVIGFLEAIVCIKFGQDLFSKTQILYVVFWLLCVAFTTFLCLYGMVWYAEHYGHREKTYSECEDGTPEISWHHGKGSKGSEDSPPKHSSNNESHSSRRRNRHSKSKVTNGVGKK</sequence>
<name>PTSS1_CRIGR</name>
<accession>Q00576</accession>
<accession>G3I993</accession>